<gene>
    <name type="primary">rpl31e</name>
    <name type="ordered locus">VNG_2467G</name>
</gene>
<protein>
    <recommendedName>
        <fullName evidence="2">Large ribosomal subunit protein eL31</fullName>
    </recommendedName>
    <alternativeName>
        <fullName>50S ribosomal protein L31e</fullName>
    </alternativeName>
</protein>
<keyword id="KW-1185">Reference proteome</keyword>
<keyword id="KW-0687">Ribonucleoprotein</keyword>
<keyword id="KW-0689">Ribosomal protein</keyword>
<organism>
    <name type="scientific">Halobacterium salinarum (strain ATCC 700922 / JCM 11081 / NRC-1)</name>
    <name type="common">Halobacterium halobium</name>
    <dbReference type="NCBI Taxonomy" id="64091"/>
    <lineage>
        <taxon>Archaea</taxon>
        <taxon>Methanobacteriati</taxon>
        <taxon>Methanobacteriota</taxon>
        <taxon>Stenosarchaea group</taxon>
        <taxon>Halobacteria</taxon>
        <taxon>Halobacteriales</taxon>
        <taxon>Halobacteriaceae</taxon>
        <taxon>Halobacterium</taxon>
        <taxon>Halobacterium salinarum NRC-34001</taxon>
    </lineage>
</organism>
<name>RL31_HALSA</name>
<sequence length="92" mass="10223">MSASEFDDRFVTVPLRDVTKVPSHERAGEAMNIIRQHLAKQFAVDEDAVRLDPSINDAVWSEGNNNPPRKLRVHAGSFAEDGETVVEADYEG</sequence>
<comment type="similarity">
    <text evidence="2">Belongs to the eukaryotic ribosomal protein eL31 family.</text>
</comment>
<feature type="initiator methionine" description="Removed" evidence="1">
    <location>
        <position position="1"/>
    </location>
</feature>
<feature type="chain" id="PRO_0000153792" description="Large ribosomal subunit protein eL31">
    <location>
        <begin position="2"/>
        <end position="92"/>
    </location>
</feature>
<reference key="1">
    <citation type="journal article" date="2000" name="Proc. Natl. Acad. Sci. U.S.A.">
        <title>Genome sequence of Halobacterium species NRC-1.</title>
        <authorList>
            <person name="Ng W.V."/>
            <person name="Kennedy S.P."/>
            <person name="Mahairas G.G."/>
            <person name="Berquist B."/>
            <person name="Pan M."/>
            <person name="Shukla H.D."/>
            <person name="Lasky S.R."/>
            <person name="Baliga N.S."/>
            <person name="Thorsson V."/>
            <person name="Sbrogna J."/>
            <person name="Swartzell S."/>
            <person name="Weir D."/>
            <person name="Hall J."/>
            <person name="Dahl T.A."/>
            <person name="Welti R."/>
            <person name="Goo Y.A."/>
            <person name="Leithauser B."/>
            <person name="Keller K."/>
            <person name="Cruz R."/>
            <person name="Danson M.J."/>
            <person name="Hough D.W."/>
            <person name="Maddocks D.G."/>
            <person name="Jablonski P.E."/>
            <person name="Krebs M.P."/>
            <person name="Angevine C.M."/>
            <person name="Dale H."/>
            <person name="Isenbarger T.A."/>
            <person name="Peck R.F."/>
            <person name="Pohlschroder M."/>
            <person name="Spudich J.L."/>
            <person name="Jung K.-H."/>
            <person name="Alam M."/>
            <person name="Freitas T."/>
            <person name="Hou S."/>
            <person name="Daniels C.J."/>
            <person name="Dennis P.P."/>
            <person name="Omer A.D."/>
            <person name="Ebhardt H."/>
            <person name="Lowe T.M."/>
            <person name="Liang P."/>
            <person name="Riley M."/>
            <person name="Hood L."/>
            <person name="DasSarma S."/>
        </authorList>
    </citation>
    <scope>NUCLEOTIDE SEQUENCE [LARGE SCALE GENOMIC DNA]</scope>
    <source>
        <strain>ATCC 700922 / JCM 11081 / NRC-1</strain>
    </source>
</reference>
<evidence type="ECO:0000250" key="1"/>
<evidence type="ECO:0000305" key="2"/>
<accession>Q9HMN0</accession>
<dbReference type="EMBL" id="AE004437">
    <property type="protein sequence ID" value="AAG20541.1"/>
    <property type="molecule type" value="Genomic_DNA"/>
</dbReference>
<dbReference type="PIR" id="A84397">
    <property type="entry name" value="A84397"/>
</dbReference>
<dbReference type="RefSeq" id="WP_010903843.1">
    <property type="nucleotide sequence ID" value="NC_002607.1"/>
</dbReference>
<dbReference type="SMR" id="Q9HMN0"/>
<dbReference type="FunCoup" id="Q9HMN0">
    <property type="interactions" value="122"/>
</dbReference>
<dbReference type="STRING" id="64091.VNG_2467G"/>
<dbReference type="PaxDb" id="64091-VNG_2467G"/>
<dbReference type="KEGG" id="hal:VNG_2467G"/>
<dbReference type="PATRIC" id="fig|64091.14.peg.1909"/>
<dbReference type="HOGENOM" id="CLU_112570_3_2_2"/>
<dbReference type="InParanoid" id="Q9HMN0"/>
<dbReference type="OrthoDB" id="10127at2157"/>
<dbReference type="PhylomeDB" id="Q9HMN0"/>
<dbReference type="Proteomes" id="UP000000554">
    <property type="component" value="Chromosome"/>
</dbReference>
<dbReference type="GO" id="GO:0022625">
    <property type="term" value="C:cytosolic large ribosomal subunit"/>
    <property type="evidence" value="ECO:0000318"/>
    <property type="project" value="GO_Central"/>
</dbReference>
<dbReference type="GO" id="GO:0003735">
    <property type="term" value="F:structural constituent of ribosome"/>
    <property type="evidence" value="ECO:0000318"/>
    <property type="project" value="GO_Central"/>
</dbReference>
<dbReference type="GO" id="GO:0002181">
    <property type="term" value="P:cytoplasmic translation"/>
    <property type="evidence" value="ECO:0000318"/>
    <property type="project" value="GO_Central"/>
</dbReference>
<dbReference type="CDD" id="cd00463">
    <property type="entry name" value="Ribosomal_L31e"/>
    <property type="match status" value="1"/>
</dbReference>
<dbReference type="Gene3D" id="3.10.440.10">
    <property type="match status" value="1"/>
</dbReference>
<dbReference type="HAMAP" id="MF_00410">
    <property type="entry name" value="Ribosomal_eL31"/>
    <property type="match status" value="1"/>
</dbReference>
<dbReference type="InterPro" id="IPR000054">
    <property type="entry name" value="Ribosomal_eL31"/>
</dbReference>
<dbReference type="InterPro" id="IPR020052">
    <property type="entry name" value="Ribosomal_eL31_CS"/>
</dbReference>
<dbReference type="InterPro" id="IPR023621">
    <property type="entry name" value="Ribosomal_eL31_dom_sf"/>
</dbReference>
<dbReference type="NCBIfam" id="NF002258">
    <property type="entry name" value="PRK01192.1-1"/>
    <property type="match status" value="1"/>
</dbReference>
<dbReference type="PANTHER" id="PTHR10956">
    <property type="entry name" value="60S RIBOSOMAL PROTEIN L31"/>
    <property type="match status" value="1"/>
</dbReference>
<dbReference type="PANTHER" id="PTHR10956:SF0">
    <property type="entry name" value="60S RIBOSOMAL PROTEIN L31"/>
    <property type="match status" value="1"/>
</dbReference>
<dbReference type="Pfam" id="PF01198">
    <property type="entry name" value="Ribosomal_L31e"/>
    <property type="match status" value="1"/>
</dbReference>
<dbReference type="SMART" id="SM01380">
    <property type="entry name" value="Ribosomal_L31e"/>
    <property type="match status" value="1"/>
</dbReference>
<dbReference type="SUPFAM" id="SSF54575">
    <property type="entry name" value="Ribosomal protein L31e"/>
    <property type="match status" value="1"/>
</dbReference>
<dbReference type="PROSITE" id="PS01144">
    <property type="entry name" value="RIBOSOMAL_L31E"/>
    <property type="match status" value="1"/>
</dbReference>
<proteinExistence type="inferred from homology"/>